<evidence type="ECO:0000269" key="1">
    <source>
    </source>
</evidence>
<evidence type="ECO:0000305" key="2"/>
<reference key="1">
    <citation type="journal article" date="2004" name="Biochem. Biophys. Res. Commun.">
        <title>The ascaphins: a family of antimicrobial peptides from the skin secretions of the most primitive extant frog, Ascaphus truei.</title>
        <authorList>
            <person name="Conlon J.M."/>
            <person name="Sonnevend A."/>
            <person name="Davidson C."/>
            <person name="Smith D.D."/>
            <person name="Nielsen P.F."/>
        </authorList>
    </citation>
    <scope>PROTEIN SEQUENCE</scope>
    <scope>FUNCTION</scope>
    <scope>MASS SPECTROMETRY</scope>
    <source>
        <tissue>Skin secretion</tissue>
    </source>
</reference>
<dbReference type="GO" id="GO:0005576">
    <property type="term" value="C:extracellular region"/>
    <property type="evidence" value="ECO:0000314"/>
    <property type="project" value="UniProtKB"/>
</dbReference>
<dbReference type="GO" id="GO:0050829">
    <property type="term" value="P:defense response to Gram-negative bacterium"/>
    <property type="evidence" value="ECO:0000314"/>
    <property type="project" value="UniProtKB"/>
</dbReference>
<dbReference type="GO" id="GO:0050830">
    <property type="term" value="P:defense response to Gram-positive bacterium"/>
    <property type="evidence" value="ECO:0000314"/>
    <property type="project" value="UniProtKB"/>
</dbReference>
<accession>P0CJ31</accession>
<name>ASCA7_ASCTR</name>
<protein>
    <recommendedName>
        <fullName>Ascaphin-7</fullName>
    </recommendedName>
</protein>
<comment type="function">
    <text evidence="1">Antimicrobial peptide that shows higher potency against Gram-negative bacteria than against Gram-positive bacteria. Has a very week hemolytic activity.</text>
</comment>
<comment type="subcellular location">
    <subcellularLocation>
        <location>Secreted</location>
    </subcellularLocation>
</comment>
<comment type="tissue specificity">
    <text>Expressed by the skin glands.</text>
</comment>
<comment type="mass spectrometry" mass="2573.5" method="MALDI" evidence="1"/>
<comment type="similarity">
    <text evidence="2">Belongs to the ascaphin family.</text>
</comment>
<sequence length="24" mass="2559">GFKDWIKGAAKKLIKTVASAIANQ</sequence>
<proteinExistence type="evidence at protein level"/>
<keyword id="KW-0878">Amphibian defense peptide</keyword>
<keyword id="KW-0044">Antibiotic</keyword>
<keyword id="KW-0929">Antimicrobial</keyword>
<keyword id="KW-0903">Direct protein sequencing</keyword>
<keyword id="KW-0964">Secreted</keyword>
<organism>
    <name type="scientific">Ascaphus truei</name>
    <name type="common">Coastal tailed frog</name>
    <dbReference type="NCBI Taxonomy" id="8439"/>
    <lineage>
        <taxon>Eukaryota</taxon>
        <taxon>Metazoa</taxon>
        <taxon>Chordata</taxon>
        <taxon>Craniata</taxon>
        <taxon>Vertebrata</taxon>
        <taxon>Euteleostomi</taxon>
        <taxon>Amphibia</taxon>
        <taxon>Batrachia</taxon>
        <taxon>Anura</taxon>
        <taxon>Ascaphidae</taxon>
        <taxon>Ascaphus</taxon>
    </lineage>
</organism>
<feature type="peptide" id="PRO_0000406134" description="Ascaphin-7">
    <location>
        <begin position="1"/>
        <end position="24"/>
    </location>
</feature>